<reference key="1">
    <citation type="journal article" date="2004" name="Nature">
        <title>Genome sequence of the Brown Norway rat yields insights into mammalian evolution.</title>
        <authorList>
            <person name="Gibbs R.A."/>
            <person name="Weinstock G.M."/>
            <person name="Metzker M.L."/>
            <person name="Muzny D.M."/>
            <person name="Sodergren E.J."/>
            <person name="Scherer S."/>
            <person name="Scott G."/>
            <person name="Steffen D."/>
            <person name="Worley K.C."/>
            <person name="Burch P.E."/>
            <person name="Okwuonu G."/>
            <person name="Hines S."/>
            <person name="Lewis L."/>
            <person name="Deramo C."/>
            <person name="Delgado O."/>
            <person name="Dugan-Rocha S."/>
            <person name="Miner G."/>
            <person name="Morgan M."/>
            <person name="Hawes A."/>
            <person name="Gill R."/>
            <person name="Holt R.A."/>
            <person name="Adams M.D."/>
            <person name="Amanatides P.G."/>
            <person name="Baden-Tillson H."/>
            <person name="Barnstead M."/>
            <person name="Chin S."/>
            <person name="Evans C.A."/>
            <person name="Ferriera S."/>
            <person name="Fosler C."/>
            <person name="Glodek A."/>
            <person name="Gu Z."/>
            <person name="Jennings D."/>
            <person name="Kraft C.L."/>
            <person name="Nguyen T."/>
            <person name="Pfannkoch C.M."/>
            <person name="Sitter C."/>
            <person name="Sutton G.G."/>
            <person name="Venter J.C."/>
            <person name="Woodage T."/>
            <person name="Smith D."/>
            <person name="Lee H.-M."/>
            <person name="Gustafson E."/>
            <person name="Cahill P."/>
            <person name="Kana A."/>
            <person name="Doucette-Stamm L."/>
            <person name="Weinstock K."/>
            <person name="Fechtel K."/>
            <person name="Weiss R.B."/>
            <person name="Dunn D.M."/>
            <person name="Green E.D."/>
            <person name="Blakesley R.W."/>
            <person name="Bouffard G.G."/>
            <person name="De Jong P.J."/>
            <person name="Osoegawa K."/>
            <person name="Zhu B."/>
            <person name="Marra M."/>
            <person name="Schein J."/>
            <person name="Bosdet I."/>
            <person name="Fjell C."/>
            <person name="Jones S."/>
            <person name="Krzywinski M."/>
            <person name="Mathewson C."/>
            <person name="Siddiqui A."/>
            <person name="Wye N."/>
            <person name="McPherson J."/>
            <person name="Zhao S."/>
            <person name="Fraser C.M."/>
            <person name="Shetty J."/>
            <person name="Shatsman S."/>
            <person name="Geer K."/>
            <person name="Chen Y."/>
            <person name="Abramzon S."/>
            <person name="Nierman W.C."/>
            <person name="Havlak P.H."/>
            <person name="Chen R."/>
            <person name="Durbin K.J."/>
            <person name="Egan A."/>
            <person name="Ren Y."/>
            <person name="Song X.-Z."/>
            <person name="Li B."/>
            <person name="Liu Y."/>
            <person name="Qin X."/>
            <person name="Cawley S."/>
            <person name="Cooney A.J."/>
            <person name="D'Souza L.M."/>
            <person name="Martin K."/>
            <person name="Wu J.Q."/>
            <person name="Gonzalez-Garay M.L."/>
            <person name="Jackson A.R."/>
            <person name="Kalafus K.J."/>
            <person name="McLeod M.P."/>
            <person name="Milosavljevic A."/>
            <person name="Virk D."/>
            <person name="Volkov A."/>
            <person name="Wheeler D.A."/>
            <person name="Zhang Z."/>
            <person name="Bailey J.A."/>
            <person name="Eichler E.E."/>
            <person name="Tuzun E."/>
            <person name="Birney E."/>
            <person name="Mongin E."/>
            <person name="Ureta-Vidal A."/>
            <person name="Woodwark C."/>
            <person name="Zdobnov E."/>
            <person name="Bork P."/>
            <person name="Suyama M."/>
            <person name="Torrents D."/>
            <person name="Alexandersson M."/>
            <person name="Trask B.J."/>
            <person name="Young J.M."/>
            <person name="Huang H."/>
            <person name="Wang H."/>
            <person name="Xing H."/>
            <person name="Daniels S."/>
            <person name="Gietzen D."/>
            <person name="Schmidt J."/>
            <person name="Stevens K."/>
            <person name="Vitt U."/>
            <person name="Wingrove J."/>
            <person name="Camara F."/>
            <person name="Mar Alba M."/>
            <person name="Abril J.F."/>
            <person name="Guigo R."/>
            <person name="Smit A."/>
            <person name="Dubchak I."/>
            <person name="Rubin E.M."/>
            <person name="Couronne O."/>
            <person name="Poliakov A."/>
            <person name="Huebner N."/>
            <person name="Ganten D."/>
            <person name="Goesele C."/>
            <person name="Hummel O."/>
            <person name="Kreitler T."/>
            <person name="Lee Y.-A."/>
            <person name="Monti J."/>
            <person name="Schulz H."/>
            <person name="Zimdahl H."/>
            <person name="Himmelbauer H."/>
            <person name="Lehrach H."/>
            <person name="Jacob H.J."/>
            <person name="Bromberg S."/>
            <person name="Gullings-Handley J."/>
            <person name="Jensen-Seaman M.I."/>
            <person name="Kwitek A.E."/>
            <person name="Lazar J."/>
            <person name="Pasko D."/>
            <person name="Tonellato P.J."/>
            <person name="Twigger S."/>
            <person name="Ponting C.P."/>
            <person name="Duarte J.M."/>
            <person name="Rice S."/>
            <person name="Goodstadt L."/>
            <person name="Beatson S.A."/>
            <person name="Emes R.D."/>
            <person name="Winter E.E."/>
            <person name="Webber C."/>
            <person name="Brandt P."/>
            <person name="Nyakatura G."/>
            <person name="Adetobi M."/>
            <person name="Chiaromonte F."/>
            <person name="Elnitski L."/>
            <person name="Eswara P."/>
            <person name="Hardison R.C."/>
            <person name="Hou M."/>
            <person name="Kolbe D."/>
            <person name="Makova K."/>
            <person name="Miller W."/>
            <person name="Nekrutenko A."/>
            <person name="Riemer C."/>
            <person name="Schwartz S."/>
            <person name="Taylor J."/>
            <person name="Yang S."/>
            <person name="Zhang Y."/>
            <person name="Lindpaintner K."/>
            <person name="Andrews T.D."/>
            <person name="Caccamo M."/>
            <person name="Clamp M."/>
            <person name="Clarke L."/>
            <person name="Curwen V."/>
            <person name="Durbin R.M."/>
            <person name="Eyras E."/>
            <person name="Searle S.M."/>
            <person name="Cooper G.M."/>
            <person name="Batzoglou S."/>
            <person name="Brudno M."/>
            <person name="Sidow A."/>
            <person name="Stone E.A."/>
            <person name="Payseur B.A."/>
            <person name="Bourque G."/>
            <person name="Lopez-Otin C."/>
            <person name="Puente X.S."/>
            <person name="Chakrabarti K."/>
            <person name="Chatterji S."/>
            <person name="Dewey C."/>
            <person name="Pachter L."/>
            <person name="Bray N."/>
            <person name="Yap V.B."/>
            <person name="Caspi A."/>
            <person name="Tesler G."/>
            <person name="Pevzner P.A."/>
            <person name="Haussler D."/>
            <person name="Roskin K.M."/>
            <person name="Baertsch R."/>
            <person name="Clawson H."/>
            <person name="Furey T.S."/>
            <person name="Hinrichs A.S."/>
            <person name="Karolchik D."/>
            <person name="Kent W.J."/>
            <person name="Rosenbloom K.R."/>
            <person name="Trumbower H."/>
            <person name="Weirauch M."/>
            <person name="Cooper D.N."/>
            <person name="Stenson P.D."/>
            <person name="Ma B."/>
            <person name="Brent M."/>
            <person name="Arumugam M."/>
            <person name="Shteynberg D."/>
            <person name="Copley R.R."/>
            <person name="Taylor M.S."/>
            <person name="Riethman H."/>
            <person name="Mudunuri U."/>
            <person name="Peterson J."/>
            <person name="Guyer M."/>
            <person name="Felsenfeld A."/>
            <person name="Old S."/>
            <person name="Mockrin S."/>
            <person name="Collins F.S."/>
        </authorList>
    </citation>
    <scope>NUCLEOTIDE SEQUENCE [LARGE SCALE GENOMIC DNA]</scope>
    <source>
        <strain>Brown Norway</strain>
    </source>
</reference>
<reference key="2">
    <citation type="submission" date="2005-09" db="EMBL/GenBank/DDBJ databases">
        <authorList>
            <person name="Mural R.J."/>
            <person name="Adams M.D."/>
            <person name="Myers E.W."/>
            <person name="Smith H.O."/>
            <person name="Venter J.C."/>
        </authorList>
    </citation>
    <scope>NUCLEOTIDE SEQUENCE [LARGE SCALE GENOMIC DNA]</scope>
</reference>
<reference key="3">
    <citation type="journal article" date="2004" name="Genome Res.">
        <title>The status, quality, and expansion of the NIH full-length cDNA project: the Mammalian Gene Collection (MGC).</title>
        <authorList>
            <consortium name="The MGC Project Team"/>
        </authorList>
    </citation>
    <scope>NUCLEOTIDE SEQUENCE [LARGE SCALE MRNA]</scope>
</reference>
<reference key="4">
    <citation type="journal article" date="2018" name="Life Sci.">
        <title>The reversal effect of physical exercise on aging-related increases in APPL2 content in skeletal muscle.</title>
        <authorList>
            <person name="Canciglieri P.H."/>
            <person name="Kuga G.K."/>
            <person name="Munoz V.R."/>
            <person name="Gaspar R.C."/>
            <person name="da Rocha A.L."/>
            <person name="Breda L."/>
            <person name="Anaruma C.P."/>
            <person name="Minuzzi L.G."/>
            <person name="da Silva A.S.R."/>
            <person name="Cintra D.E."/>
            <person name="de Moura L.P."/>
            <person name="Ropelle E.R."/>
            <person name="Pauli J.R."/>
        </authorList>
    </citation>
    <scope>INDUCTION</scope>
</reference>
<proteinExistence type="evidence at transcript level"/>
<gene>
    <name evidence="8" type="primary">Appl2</name>
</gene>
<comment type="function">
    <text evidence="1 2">Multifunctional adapter protein that binds to various membrane receptors, nuclear factors and signaling proteins to regulate many processes, such as cell proliferation, immune response, endosomal trafficking and cell metabolism. Regulates signaling pathway leading to cell proliferation through interaction with RAB5A and subunits of the NuRD/MeCP1 complex (By similarity). Plays a role in immune response by modulating phagocytosis, inflammatory and innate immune responses. In macrophages, enhances Fc-gamma receptor-mediated phagocytosis through interaction with RAB31 leading to activation of PI3K/Akt signaling. In response to LPS, modulates inflammatory responses by playing a key role on the regulation of TLR4 signaling and in the nuclear translocation of RELA/NF-kappa-B p65 and the secretion of pro- and anti-inflammatory cytokines. Also functions as a negative regulator of innate immune response via inhibition of AKT1 signaling pathway by forming a complex with APPL1 and PIK3R1 (By similarity). Plays a role in endosomal trafficking of TGFBR1 from the endosomes to the nucleus (By similarity). Plays a role in cell metabolism by regulating adiponecting ans insulin signaling pathways and adaptative thermogenesis (By similarity). In muscle, negatively regulates adiponectin-simulated glucose uptake and fatty acid oyidation by inhibiting adiponectin signaling pathway through APPL1 sequestration thereby antagonizing APPL1 action (By similarity). In muscles, negatively regulates insulin-induced plasma membrane recruitment of GLUT4 and glucose uptake through interaction with TBC1D1 (By similarity). Plays a role in cold and diet-induced adaptive thermogenesis by activating ventromedial hypothalamus (VMH) neurons throught AMPK inhibition which enhances sympathetic outflow to subcutaneous white adipose tissue (sWAT), sWAT beiging and cold tolerance (By similarity). Also plays a role in other signaling pathways namely Wnt/beta-catenin, HGF and glucocorticoid receptor signaling (By similarity). Positive regulator of beta-catenin/TCF-dependent transcription through direct interaction with RUVBL2/reptin resulting in the relief of RUVBL2-mediated repression of beta-catenin/TCF target genes by modulating the interactions within the beta-catenin-reptin-HDAC complex (By similarity). May affect adult neurogenesis in hippocampus and olfactory system via regulating the sensitivity of glucocorticoid receptor. Required for fibroblast migration through HGF cell signaling (By similarity).</text>
</comment>
<comment type="subunit">
    <text evidence="1 2">Homodimer. Homotetramer. Binds RAB5A/Rab5 through an N-terminal domain. This interaction is essential for its recruitment to endosomal membranes as well as its role in cell proliferation. Binds subunits of the NuRD/MeCP1 complex. Interacts with FSHR; interaction is independent of follicle stimulating hormone stimulation. Interacts with APPL1; the interaction is decreased by adiponectin in a time-dependent manner. Forms a complex comprising APPL1, RUVBL2, CTNNB1, HDAC1 and HDAC2; interaction reduces interaction between CTNNB1, HDAC1, HDAC2 and RUVBL2 leading to the decrease of deacetylase activity of this complex; affects the recruitment of repressive complexes to the Wnt target genes. Interacts (via BAR domain) with TBC1D1; interaction is dependent of TBC1D1 phosphorylation at 'Ser-235'; interaction diminishes the phosphorylation of TBC1D1 at 'Thr-596', resulting in inhibition of SLC2A4 translocation and glucose uptake. Interacts with ANXA2; targets APPL2 to endosomes and acting in parallel to RAB5A. Interacts with RAB31 (in GTP-bound form); interaction contributes to or enhances recruitment of APPL2 to the phagosomes; interaction enhances Fc-gamma receptor-mediated phagocytosis through PI3K/Akt signaling in macrophages (By similarity). Interacts with PIK3R1; forms a complex with PIK3R1 and APPL1. Interacts (via BAR domain) with ADIPOR1; hinders the accessibility of APPL1 to ADIPOR1; negatively regulates adiponectin signaling; ADIPOQ dissociates this interaction and facilitates the recruitment of APPL1 to ADIPOR1. Interacts (via BAR domain) with ADIPOR2; ADIPOQ dissociates this interaction (By similarity).</text>
</comment>
<comment type="subcellular location">
    <subcellularLocation>
        <location evidence="2">Early endosome membrane</location>
        <topology evidence="2">Peripheral membrane protein</topology>
    </subcellularLocation>
    <subcellularLocation>
        <location evidence="2">Nucleus</location>
    </subcellularLocation>
    <subcellularLocation>
        <location evidence="2">Cell membrane</location>
    </subcellularLocation>
    <subcellularLocation>
        <location evidence="2">Endosome membrane</location>
    </subcellularLocation>
    <subcellularLocation>
        <location evidence="1">Cytoplasm</location>
    </subcellularLocation>
    <subcellularLocation>
        <location evidence="1">Cytoplasmic vesicle</location>
        <location evidence="1">Phagosome</location>
    </subcellularLocation>
    <subcellularLocation>
        <location evidence="1">Cell projection</location>
        <location evidence="1">Ruffle</location>
    </subcellularLocation>
    <subcellularLocation>
        <location evidence="1">Cell projection</location>
        <location evidence="1">Ruffle membrane</location>
    </subcellularLocation>
    <subcellularLocation>
        <location evidence="1">Cell membrane</location>
    </subcellularLocation>
    <subcellularLocation>
        <location evidence="1">Cytoplasmic vesicle</location>
        <location evidence="1">Phagosome membrane</location>
    </subcellularLocation>
    <text evidence="1 2">Early endosomal membrane-bound and nuclear. Translocated into the nucleus upon release from endosomal membranes following internalization of EGF. Associates dynamically with cytoplasmic membrane structures that undergo changes in shape, movement, fusion and fission events. PI(4,5)P2 levels are important for membrane association of APPL2 (By similarity). Absent of endosome in macrophage. Colocalized with RAB31 at early-stage phagosome. Localized on macropinosomes in LPS-activated macrophages. Associated with membrane domains in contact with pathogens and pathogen-derived ligands like LPS. First recruited to the ruffles, and accumulates on macropinosomes (By similarity).</text>
</comment>
<comment type="induction">
    <text evidence="7">Increases with aging and decreases by short-term exercise training in aging skeletal muscle.</text>
</comment>
<comment type="domain">
    <text evidence="1 2">The BAR domain is necessary and sufficient for mediating homotypic and heterotypic interactions; associates with cytoplasmic membrane structures; mediates interaction with TBC1D1 and ADIPOR1 (By similarity). The PH and PID domains mediate phosphoinositide binding. The PID domain mediates phosphatidylserine binding and allows localization to cytosolic membrane structures and nucleus. The PH domain allows localization to the plasma membrane, cytosolic vesicles and distinct nuclear and perinuclear structures and is sufficient for RUVBL2 interaction (By similarity).</text>
</comment>
<accession>B4F779</accession>
<sequence length="662" mass="74117">MPAVDKLLLEEALQDSPQTRSLLSVFEEDAGTLTDYTNQLLQAMQRVYGAQNEMCLATQQLSRQLLAYEKQNFALGKGDEEVISTLHYFSKVMDELNGLHSELAKQLADTMVLPVIQFREKDLTEVSTLKDLFGLASNEHDLSMAKYSRLPKRKENERVKTDVAKEVAAARRKQHLSSLQYYCALNALQYRKRAAMMEPLIGFAHGQINFFKKGAEMFSKSMDGFLSSVTDMVQSIQVELEAEADKMRVSQQELLSVSESVYTPDIDVATPQINRNLIQKTGYLNLRNKTGLVTTTWERLYFFTQGGNLMCQPRGAVAGGLIQDLDNCSVMAVDCEDRRYCFQISTPSGKPGIILQAESRKEYEEWICAINNISRQIYLTDNPEAVAIKLNQTALQAVTPITSFGKKQESFYFSQNIKNSDTGYVKIVPKAAASIPETEELIAPGTPIQFDIVLPATEFLDQNRGSRRINPFGETEDDSFPDAEDSLLQQMFIVRFLGSMAVKTDSTTEVIYEAMRQVLAARAIHNIFRTTESHLMVTSQTLRLIDPQTQVSRACFELTSVTQFAAHQENKRLVGFVIRVPESTGEESLSTYIFESNSEGEKICYAINLGKEIIEVQKDPEALARLMLSVPLTNDGKYVLLNDQADDTGGSPSDHRGAESEA</sequence>
<evidence type="ECO:0000250" key="1">
    <source>
        <dbReference type="UniProtKB" id="Q8K3G9"/>
    </source>
</evidence>
<evidence type="ECO:0000250" key="2">
    <source>
        <dbReference type="UniProtKB" id="Q8NEU8"/>
    </source>
</evidence>
<evidence type="ECO:0000255" key="3">
    <source>
        <dbReference type="PROSITE-ProRule" id="PRU00145"/>
    </source>
</evidence>
<evidence type="ECO:0000255" key="4">
    <source>
        <dbReference type="PROSITE-ProRule" id="PRU00148"/>
    </source>
</evidence>
<evidence type="ECO:0000255" key="5">
    <source>
        <dbReference type="PROSITE-ProRule" id="PRU00361"/>
    </source>
</evidence>
<evidence type="ECO:0000256" key="6">
    <source>
        <dbReference type="SAM" id="MobiDB-lite"/>
    </source>
</evidence>
<evidence type="ECO:0000269" key="7">
    <source>
    </source>
</evidence>
<evidence type="ECO:0000312" key="8">
    <source>
        <dbReference type="RGD" id="1563028"/>
    </source>
</evidence>
<feature type="chain" id="PRO_0000446255" description="DCC-interacting protein 13-beta">
    <location>
        <begin position="1"/>
        <end position="662"/>
    </location>
</feature>
<feature type="domain" description="BAR" evidence="5">
    <location>
        <begin position="3"/>
        <end position="268"/>
    </location>
</feature>
<feature type="domain" description="PH" evidence="3">
    <location>
        <begin position="277"/>
        <end position="375"/>
    </location>
</feature>
<feature type="domain" description="PID" evidence="4">
    <location>
        <begin position="486"/>
        <end position="635"/>
    </location>
</feature>
<feature type="region of interest" description="Disordered" evidence="6">
    <location>
        <begin position="643"/>
        <end position="662"/>
    </location>
</feature>
<feature type="compositionally biased region" description="Basic and acidic residues" evidence="6">
    <location>
        <begin position="653"/>
        <end position="662"/>
    </location>
</feature>
<keyword id="KW-0131">Cell cycle</keyword>
<keyword id="KW-1003">Cell membrane</keyword>
<keyword id="KW-0966">Cell projection</keyword>
<keyword id="KW-0963">Cytoplasm</keyword>
<keyword id="KW-0968">Cytoplasmic vesicle</keyword>
<keyword id="KW-0967">Endosome</keyword>
<keyword id="KW-0472">Membrane</keyword>
<keyword id="KW-0539">Nucleus</keyword>
<keyword id="KW-1185">Reference proteome</keyword>
<name>DP13B_RAT</name>
<organism>
    <name type="scientific">Rattus norvegicus</name>
    <name type="common">Rat</name>
    <dbReference type="NCBI Taxonomy" id="10116"/>
    <lineage>
        <taxon>Eukaryota</taxon>
        <taxon>Metazoa</taxon>
        <taxon>Chordata</taxon>
        <taxon>Craniata</taxon>
        <taxon>Vertebrata</taxon>
        <taxon>Euteleostomi</taxon>
        <taxon>Mammalia</taxon>
        <taxon>Eutheria</taxon>
        <taxon>Euarchontoglires</taxon>
        <taxon>Glires</taxon>
        <taxon>Rodentia</taxon>
        <taxon>Myomorpha</taxon>
        <taxon>Muroidea</taxon>
        <taxon>Muridae</taxon>
        <taxon>Murinae</taxon>
        <taxon>Rattus</taxon>
    </lineage>
</organism>
<protein>
    <recommendedName>
        <fullName evidence="2">DCC-interacting protein 13-beta</fullName>
    </recommendedName>
    <alternativeName>
        <fullName evidence="2">Adapter protein containing PH domain, PTB domain and leucine zipper motif 2</fullName>
    </alternativeName>
</protein>
<dbReference type="EMBL" id="AABR07056466">
    <property type="status" value="NOT_ANNOTATED_CDS"/>
    <property type="molecule type" value="Genomic_DNA"/>
</dbReference>
<dbReference type="EMBL" id="CH473960">
    <property type="protein sequence ID" value="EDM17085.1"/>
    <property type="molecule type" value="Genomic_DNA"/>
</dbReference>
<dbReference type="EMBL" id="BC168167">
    <property type="protein sequence ID" value="AAI68167.1"/>
    <property type="molecule type" value="mRNA"/>
</dbReference>
<dbReference type="RefSeq" id="NP_001102211.1">
    <property type="nucleotide sequence ID" value="NM_001108741.1"/>
</dbReference>
<dbReference type="SMR" id="B4F779"/>
<dbReference type="FunCoup" id="B4F779">
    <property type="interactions" value="2210"/>
</dbReference>
<dbReference type="IntAct" id="B4F779">
    <property type="interactions" value="6"/>
</dbReference>
<dbReference type="STRING" id="10116.ENSRNOP00000010986"/>
<dbReference type="iPTMnet" id="B4F779"/>
<dbReference type="PhosphoSitePlus" id="B4F779"/>
<dbReference type="PaxDb" id="10116-ENSRNOP00000010986"/>
<dbReference type="PeptideAtlas" id="B4F779"/>
<dbReference type="Ensembl" id="ENSRNOT00000010986.6">
    <property type="protein sequence ID" value="ENSRNOP00000010986.4"/>
    <property type="gene ID" value="ENSRNOG00000008174.6"/>
</dbReference>
<dbReference type="GeneID" id="362860"/>
<dbReference type="KEGG" id="rno:362860"/>
<dbReference type="UCSC" id="RGD:1563028">
    <property type="organism name" value="rat"/>
</dbReference>
<dbReference type="AGR" id="RGD:1563028"/>
<dbReference type="CTD" id="55198"/>
<dbReference type="RGD" id="1563028">
    <property type="gene designation" value="Appl2"/>
</dbReference>
<dbReference type="eggNOG" id="KOG0521">
    <property type="taxonomic scope" value="Eukaryota"/>
</dbReference>
<dbReference type="eggNOG" id="KOG3536">
    <property type="taxonomic scope" value="Eukaryota"/>
</dbReference>
<dbReference type="GeneTree" id="ENSGT00940000158319"/>
<dbReference type="HOGENOM" id="CLU_025935_0_0_1"/>
<dbReference type="InParanoid" id="B4F779"/>
<dbReference type="OMA" id="ENDEWIC"/>
<dbReference type="OrthoDB" id="10070851at2759"/>
<dbReference type="PhylomeDB" id="B4F779"/>
<dbReference type="TreeFam" id="TF328669"/>
<dbReference type="PRO" id="PR:B4F779"/>
<dbReference type="Proteomes" id="UP000002494">
    <property type="component" value="Chromosome 7"/>
</dbReference>
<dbReference type="Proteomes" id="UP000234681">
    <property type="component" value="Chromosome 7"/>
</dbReference>
<dbReference type="Bgee" id="ENSRNOG00000008174">
    <property type="expression patterns" value="Expressed in cerebellum and 20 other cell types or tissues"/>
</dbReference>
<dbReference type="GO" id="GO:0005737">
    <property type="term" value="C:cytoplasm"/>
    <property type="evidence" value="ECO:0000266"/>
    <property type="project" value="RGD"/>
</dbReference>
<dbReference type="GO" id="GO:0031410">
    <property type="term" value="C:cytoplasmic vesicle"/>
    <property type="evidence" value="ECO:0000266"/>
    <property type="project" value="RGD"/>
</dbReference>
<dbReference type="GO" id="GO:0031901">
    <property type="term" value="C:early endosome membrane"/>
    <property type="evidence" value="ECO:0007669"/>
    <property type="project" value="UniProtKB-SubCell"/>
</dbReference>
<dbReference type="GO" id="GO:0032009">
    <property type="term" value="C:early phagosome"/>
    <property type="evidence" value="ECO:0000266"/>
    <property type="project" value="RGD"/>
</dbReference>
<dbReference type="GO" id="GO:0036186">
    <property type="term" value="C:early phagosome membrane"/>
    <property type="evidence" value="ECO:0000266"/>
    <property type="project" value="RGD"/>
</dbReference>
<dbReference type="GO" id="GO:0005768">
    <property type="term" value="C:endosome"/>
    <property type="evidence" value="ECO:0000266"/>
    <property type="project" value="RGD"/>
</dbReference>
<dbReference type="GO" id="GO:0010008">
    <property type="term" value="C:endosome membrane"/>
    <property type="evidence" value="ECO:0000266"/>
    <property type="project" value="RGD"/>
</dbReference>
<dbReference type="GO" id="GO:0044354">
    <property type="term" value="C:macropinosome"/>
    <property type="evidence" value="ECO:0000266"/>
    <property type="project" value="RGD"/>
</dbReference>
<dbReference type="GO" id="GO:0016020">
    <property type="term" value="C:membrane"/>
    <property type="evidence" value="ECO:0000266"/>
    <property type="project" value="RGD"/>
</dbReference>
<dbReference type="GO" id="GO:0005634">
    <property type="term" value="C:nucleus"/>
    <property type="evidence" value="ECO:0000266"/>
    <property type="project" value="RGD"/>
</dbReference>
<dbReference type="GO" id="GO:0005886">
    <property type="term" value="C:plasma membrane"/>
    <property type="evidence" value="ECO:0000266"/>
    <property type="project" value="RGD"/>
</dbReference>
<dbReference type="GO" id="GO:0001726">
    <property type="term" value="C:ruffle"/>
    <property type="evidence" value="ECO:0000266"/>
    <property type="project" value="RGD"/>
</dbReference>
<dbReference type="GO" id="GO:0032587">
    <property type="term" value="C:ruffle membrane"/>
    <property type="evidence" value="ECO:0000266"/>
    <property type="project" value="RGD"/>
</dbReference>
<dbReference type="GO" id="GO:0031982">
    <property type="term" value="C:vesicle"/>
    <property type="evidence" value="ECO:0000266"/>
    <property type="project" value="RGD"/>
</dbReference>
<dbReference type="GO" id="GO:0042802">
    <property type="term" value="F:identical protein binding"/>
    <property type="evidence" value="ECO:0000266"/>
    <property type="project" value="RGD"/>
</dbReference>
<dbReference type="GO" id="GO:0035091">
    <property type="term" value="F:phosphatidylinositol binding"/>
    <property type="evidence" value="ECO:0000266"/>
    <property type="project" value="RGD"/>
</dbReference>
<dbReference type="GO" id="GO:0001786">
    <property type="term" value="F:phosphatidylserine binding"/>
    <property type="evidence" value="ECO:0000266"/>
    <property type="project" value="RGD"/>
</dbReference>
<dbReference type="GO" id="GO:0042803">
    <property type="term" value="F:protein homodimerization activity"/>
    <property type="evidence" value="ECO:0000266"/>
    <property type="project" value="RGD"/>
</dbReference>
<dbReference type="GO" id="GO:0044877">
    <property type="term" value="F:protein-containing complex binding"/>
    <property type="evidence" value="ECO:0000266"/>
    <property type="project" value="RGD"/>
</dbReference>
<dbReference type="GO" id="GO:0033211">
    <property type="term" value="P:adiponectin-activated signaling pathway"/>
    <property type="evidence" value="ECO:0000266"/>
    <property type="project" value="RGD"/>
</dbReference>
<dbReference type="GO" id="GO:0035729">
    <property type="term" value="P:cellular response to hepatocyte growth factor stimulus"/>
    <property type="evidence" value="ECO:0000266"/>
    <property type="project" value="RGD"/>
</dbReference>
<dbReference type="GO" id="GO:0009631">
    <property type="term" value="P:cold acclimation"/>
    <property type="evidence" value="ECO:0000266"/>
    <property type="project" value="RGD"/>
</dbReference>
<dbReference type="GO" id="GO:0002024">
    <property type="term" value="P:diet induced thermogenesis"/>
    <property type="evidence" value="ECO:0000266"/>
    <property type="project" value="RGD"/>
</dbReference>
<dbReference type="GO" id="GO:0042593">
    <property type="term" value="P:glucose homeostasis"/>
    <property type="evidence" value="ECO:0000250"/>
    <property type="project" value="UniProtKB"/>
</dbReference>
<dbReference type="GO" id="GO:1900077">
    <property type="term" value="P:negative regulation of cellular response to insulin stimulus"/>
    <property type="evidence" value="ECO:0000266"/>
    <property type="project" value="RGD"/>
</dbReference>
<dbReference type="GO" id="GO:1900016">
    <property type="term" value="P:negative regulation of cytokine production involved in inflammatory response"/>
    <property type="evidence" value="ECO:0000266"/>
    <property type="project" value="RGD"/>
</dbReference>
<dbReference type="GO" id="GO:0046325">
    <property type="term" value="P:negative regulation of D-glucose import"/>
    <property type="evidence" value="ECO:0000250"/>
    <property type="project" value="UniProtKB"/>
</dbReference>
<dbReference type="GO" id="GO:0046322">
    <property type="term" value="P:negative regulation of fatty acid oxidation"/>
    <property type="evidence" value="ECO:0000266"/>
    <property type="project" value="RGD"/>
</dbReference>
<dbReference type="GO" id="GO:2000178">
    <property type="term" value="P:negative regulation of neural precursor cell proliferation"/>
    <property type="evidence" value="ECO:0000266"/>
    <property type="project" value="RGD"/>
</dbReference>
<dbReference type="GO" id="GO:0050768">
    <property type="term" value="P:negative regulation of neurogenesis"/>
    <property type="evidence" value="ECO:0000266"/>
    <property type="project" value="RGD"/>
</dbReference>
<dbReference type="GO" id="GO:0120162">
    <property type="term" value="P:positive regulation of cold-induced thermogenesis"/>
    <property type="evidence" value="ECO:0000266"/>
    <property type="project" value="RGD"/>
</dbReference>
<dbReference type="GO" id="GO:1905451">
    <property type="term" value="P:positive regulation of Fc-gamma receptor signaling pathway involved in phagocytosis"/>
    <property type="evidence" value="ECO:0000266"/>
    <property type="project" value="RGD"/>
</dbReference>
<dbReference type="GO" id="GO:1905303">
    <property type="term" value="P:positive regulation of macropinocytosis"/>
    <property type="evidence" value="ECO:0000266"/>
    <property type="project" value="RGD"/>
</dbReference>
<dbReference type="GO" id="GO:0060100">
    <property type="term" value="P:positive regulation of phagocytosis, engulfment"/>
    <property type="evidence" value="ECO:0000266"/>
    <property type="project" value="RGD"/>
</dbReference>
<dbReference type="GO" id="GO:0051289">
    <property type="term" value="P:protein homotetramerization"/>
    <property type="evidence" value="ECO:0000266"/>
    <property type="project" value="RGD"/>
</dbReference>
<dbReference type="GO" id="GO:0006606">
    <property type="term" value="P:protein import into nucleus"/>
    <property type="evidence" value="ECO:0000266"/>
    <property type="project" value="RGD"/>
</dbReference>
<dbReference type="GO" id="GO:0010762">
    <property type="term" value="P:regulation of fibroblast migration"/>
    <property type="evidence" value="ECO:0000266"/>
    <property type="project" value="RGD"/>
</dbReference>
<dbReference type="GO" id="GO:2000045">
    <property type="term" value="P:regulation of G1/S transition of mitotic cell cycle"/>
    <property type="evidence" value="ECO:0000266"/>
    <property type="project" value="RGD"/>
</dbReference>
<dbReference type="GO" id="GO:0045088">
    <property type="term" value="P:regulation of innate immune response"/>
    <property type="evidence" value="ECO:0000266"/>
    <property type="project" value="RGD"/>
</dbReference>
<dbReference type="GO" id="GO:0034143">
    <property type="term" value="P:regulation of toll-like receptor 4 signaling pathway"/>
    <property type="evidence" value="ECO:0000266"/>
    <property type="project" value="RGD"/>
</dbReference>
<dbReference type="GO" id="GO:0023052">
    <property type="term" value="P:signaling"/>
    <property type="evidence" value="ECO:0000318"/>
    <property type="project" value="GO_Central"/>
</dbReference>
<dbReference type="GO" id="GO:0007179">
    <property type="term" value="P:transforming growth factor beta receptor signaling pathway"/>
    <property type="evidence" value="ECO:0000266"/>
    <property type="project" value="RGD"/>
</dbReference>
<dbReference type="CDD" id="cd13247">
    <property type="entry name" value="BAR-PH_APPL"/>
    <property type="match status" value="1"/>
</dbReference>
<dbReference type="CDD" id="cd07632">
    <property type="entry name" value="BAR_APPL2"/>
    <property type="match status" value="1"/>
</dbReference>
<dbReference type="CDD" id="cd13158">
    <property type="entry name" value="PTB_APPL"/>
    <property type="match status" value="1"/>
</dbReference>
<dbReference type="FunFam" id="2.30.29.30:FF:000160">
    <property type="entry name" value="DCC-interacting protein 13-beta isoform X2"/>
    <property type="match status" value="1"/>
</dbReference>
<dbReference type="FunFam" id="1.20.1270.60:FF:000031">
    <property type="entry name" value="Putative DCC-interacting protein 13-beta isoform 2"/>
    <property type="match status" value="1"/>
</dbReference>
<dbReference type="FunFam" id="2.30.29.30:FF:000067">
    <property type="entry name" value="Putative DCC-interacting protein 13-beta isoform 2"/>
    <property type="match status" value="1"/>
</dbReference>
<dbReference type="Gene3D" id="1.20.1270.60">
    <property type="entry name" value="Arfaptin homology (AH) domain/BAR domain"/>
    <property type="match status" value="1"/>
</dbReference>
<dbReference type="Gene3D" id="2.30.29.30">
    <property type="entry name" value="Pleckstrin-homology domain (PH domain)/Phosphotyrosine-binding domain (PTB)"/>
    <property type="match status" value="2"/>
</dbReference>
<dbReference type="InterPro" id="IPR027267">
    <property type="entry name" value="AH/BAR_dom_sf"/>
</dbReference>
<dbReference type="InterPro" id="IPR047239">
    <property type="entry name" value="BAR_APPL2"/>
</dbReference>
<dbReference type="InterPro" id="IPR004148">
    <property type="entry name" value="BAR_dom"/>
</dbReference>
<dbReference type="InterPro" id="IPR047181">
    <property type="entry name" value="DP13A/B"/>
</dbReference>
<dbReference type="InterPro" id="IPR011993">
    <property type="entry name" value="PH-like_dom_sf"/>
</dbReference>
<dbReference type="InterPro" id="IPR001849">
    <property type="entry name" value="PH_domain"/>
</dbReference>
<dbReference type="InterPro" id="IPR047236">
    <property type="entry name" value="PH_DP13A/B"/>
</dbReference>
<dbReference type="InterPro" id="IPR006020">
    <property type="entry name" value="PTB/PI_dom"/>
</dbReference>
<dbReference type="InterPro" id="IPR047237">
    <property type="entry name" value="PTB_APPL"/>
</dbReference>
<dbReference type="PANTHER" id="PTHR46415">
    <property type="entry name" value="ADAPTOR PROTEIN, PHOSPHOTYROSINE INTERACTION, PH DOMAIN AND LEUCINE ZIPPER-CONTAINING 2"/>
    <property type="match status" value="1"/>
</dbReference>
<dbReference type="PANTHER" id="PTHR46415:SF1">
    <property type="entry name" value="DCC-INTERACTING PROTEIN 13-BETA"/>
    <property type="match status" value="1"/>
</dbReference>
<dbReference type="Pfam" id="PF16746">
    <property type="entry name" value="BAR_3"/>
    <property type="match status" value="1"/>
</dbReference>
<dbReference type="Pfam" id="PF00169">
    <property type="entry name" value="PH"/>
    <property type="match status" value="1"/>
</dbReference>
<dbReference type="Pfam" id="PF00640">
    <property type="entry name" value="PID"/>
    <property type="match status" value="1"/>
</dbReference>
<dbReference type="SMART" id="SM00233">
    <property type="entry name" value="PH"/>
    <property type="match status" value="1"/>
</dbReference>
<dbReference type="SMART" id="SM00462">
    <property type="entry name" value="PTB"/>
    <property type="match status" value="1"/>
</dbReference>
<dbReference type="SUPFAM" id="SSF103657">
    <property type="entry name" value="BAR/IMD domain-like"/>
    <property type="match status" value="1"/>
</dbReference>
<dbReference type="SUPFAM" id="SSF50729">
    <property type="entry name" value="PH domain-like"/>
    <property type="match status" value="2"/>
</dbReference>
<dbReference type="PROSITE" id="PS50003">
    <property type="entry name" value="PH_DOMAIN"/>
    <property type="match status" value="1"/>
</dbReference>
<dbReference type="PROSITE" id="PS01179">
    <property type="entry name" value="PID"/>
    <property type="match status" value="1"/>
</dbReference>